<organism>
    <name type="scientific">Homo sapiens</name>
    <name type="common">Human</name>
    <dbReference type="NCBI Taxonomy" id="9606"/>
    <lineage>
        <taxon>Eukaryota</taxon>
        <taxon>Metazoa</taxon>
        <taxon>Chordata</taxon>
        <taxon>Craniata</taxon>
        <taxon>Vertebrata</taxon>
        <taxon>Euteleostomi</taxon>
        <taxon>Mammalia</taxon>
        <taxon>Eutheria</taxon>
        <taxon>Euarchontoglires</taxon>
        <taxon>Primates</taxon>
        <taxon>Haplorrhini</taxon>
        <taxon>Catarrhini</taxon>
        <taxon>Hominidae</taxon>
        <taxon>Homo</taxon>
    </lineage>
</organism>
<evidence type="ECO:0000256" key="1">
    <source>
        <dbReference type="SAM" id="MobiDB-lite"/>
    </source>
</evidence>
<evidence type="ECO:0000269" key="2">
    <source>
    </source>
</evidence>
<evidence type="ECO:0000305" key="3"/>
<evidence type="ECO:0000312" key="4">
    <source>
        <dbReference type="HGNC" id="HGNC:32699"/>
    </source>
</evidence>
<reference key="1">
    <citation type="journal article" date="2004" name="Nature">
        <title>The DNA sequence and biology of human chromosome 19.</title>
        <authorList>
            <person name="Grimwood J."/>
            <person name="Gordon L.A."/>
            <person name="Olsen A.S."/>
            <person name="Terry A."/>
            <person name="Schmutz J."/>
            <person name="Lamerdin J.E."/>
            <person name="Hellsten U."/>
            <person name="Goodstein D."/>
            <person name="Couronne O."/>
            <person name="Tran-Gyamfi M."/>
            <person name="Aerts A."/>
            <person name="Altherr M."/>
            <person name="Ashworth L."/>
            <person name="Bajorek E."/>
            <person name="Black S."/>
            <person name="Branscomb E."/>
            <person name="Caenepeel S."/>
            <person name="Carrano A.V."/>
            <person name="Caoile C."/>
            <person name="Chan Y.M."/>
            <person name="Christensen M."/>
            <person name="Cleland C.A."/>
            <person name="Copeland A."/>
            <person name="Dalin E."/>
            <person name="Dehal P."/>
            <person name="Denys M."/>
            <person name="Detter J.C."/>
            <person name="Escobar J."/>
            <person name="Flowers D."/>
            <person name="Fotopulos D."/>
            <person name="Garcia C."/>
            <person name="Georgescu A.M."/>
            <person name="Glavina T."/>
            <person name="Gomez M."/>
            <person name="Gonzales E."/>
            <person name="Groza M."/>
            <person name="Hammon N."/>
            <person name="Hawkins T."/>
            <person name="Haydu L."/>
            <person name="Ho I."/>
            <person name="Huang W."/>
            <person name="Israni S."/>
            <person name="Jett J."/>
            <person name="Kadner K."/>
            <person name="Kimball H."/>
            <person name="Kobayashi A."/>
            <person name="Larionov V."/>
            <person name="Leem S.-H."/>
            <person name="Lopez F."/>
            <person name="Lou Y."/>
            <person name="Lowry S."/>
            <person name="Malfatti S."/>
            <person name="Martinez D."/>
            <person name="McCready P.M."/>
            <person name="Medina C."/>
            <person name="Morgan J."/>
            <person name="Nelson K."/>
            <person name="Nolan M."/>
            <person name="Ovcharenko I."/>
            <person name="Pitluck S."/>
            <person name="Pollard M."/>
            <person name="Popkie A.P."/>
            <person name="Predki P."/>
            <person name="Quan G."/>
            <person name="Ramirez L."/>
            <person name="Rash S."/>
            <person name="Retterer J."/>
            <person name="Rodriguez A."/>
            <person name="Rogers S."/>
            <person name="Salamov A."/>
            <person name="Salazar A."/>
            <person name="She X."/>
            <person name="Smith D."/>
            <person name="Slezak T."/>
            <person name="Solovyev V."/>
            <person name="Thayer N."/>
            <person name="Tice H."/>
            <person name="Tsai M."/>
            <person name="Ustaszewska A."/>
            <person name="Vo N."/>
            <person name="Wagner M."/>
            <person name="Wheeler J."/>
            <person name="Wu K."/>
            <person name="Xie G."/>
            <person name="Yang J."/>
            <person name="Dubchak I."/>
            <person name="Furey T.S."/>
            <person name="DeJong P."/>
            <person name="Dickson M."/>
            <person name="Gordon D."/>
            <person name="Eichler E.E."/>
            <person name="Pennacchio L.A."/>
            <person name="Richardson P."/>
            <person name="Stubbs L."/>
            <person name="Rokhsar D.S."/>
            <person name="Myers R.M."/>
            <person name="Rubin E.M."/>
            <person name="Lucas S.M."/>
        </authorList>
    </citation>
    <scope>NUCLEOTIDE SEQUENCE [LARGE SCALE GENOMIC DNA]</scope>
</reference>
<reference key="2">
    <citation type="journal article" date="2004" name="Genome Res.">
        <title>The status, quality, and expansion of the NIH full-length cDNA project: the Mammalian Gene Collection (MGC).</title>
        <authorList>
            <consortium name="The MGC Project Team"/>
        </authorList>
    </citation>
    <scope>NUCLEOTIDE SEQUENCE [LARGE SCALE MRNA]</scope>
    <scope>VARIANT PRO-186</scope>
    <source>
        <tissue>Eye</tissue>
    </source>
</reference>
<dbReference type="EMBL" id="AC005746">
    <property type="status" value="NOT_ANNOTATED_CDS"/>
    <property type="molecule type" value="Genomic_DNA"/>
</dbReference>
<dbReference type="EMBL" id="BC046200">
    <property type="protein sequence ID" value="AAH46200.1"/>
    <property type="molecule type" value="mRNA"/>
</dbReference>
<dbReference type="RefSeq" id="NP_982249.2">
    <property type="nucleotide sequence ID" value="NM_203425.2"/>
</dbReference>
<dbReference type="BioGRID" id="132677">
    <property type="interactions" value="19"/>
</dbReference>
<dbReference type="IntAct" id="Q86X59">
    <property type="interactions" value="15"/>
</dbReference>
<dbReference type="MINT" id="Q86X59"/>
<dbReference type="GlyGen" id="Q86X59">
    <property type="glycosylation" value="2 sites, 1 O-linked glycan (1 site)"/>
</dbReference>
<dbReference type="iPTMnet" id="Q86X59"/>
<dbReference type="PhosphoSitePlus" id="Q86X59"/>
<dbReference type="BioMuta" id="HGNC:32699"/>
<dbReference type="PaxDb" id="9606-ENSP00000335229"/>
<dbReference type="ProteomicsDB" id="70244"/>
<dbReference type="DNASU" id="388407"/>
<dbReference type="AGR" id="HGNC:32699"/>
<dbReference type="GeneCards" id="LINC02875"/>
<dbReference type="HGNC" id="HGNC:32699">
    <property type="gene designation" value="LINC02875"/>
</dbReference>
<dbReference type="neXtProt" id="NX_Q86X59"/>
<dbReference type="eggNOG" id="ENOG502TK98">
    <property type="taxonomic scope" value="Eukaryota"/>
</dbReference>
<dbReference type="InParanoid" id="Q86X59"/>
<dbReference type="PAN-GO" id="Q86X59">
    <property type="GO annotations" value="0 GO annotations based on evolutionary models"/>
</dbReference>
<dbReference type="PathwayCommons" id="Q86X59"/>
<dbReference type="SignaLink" id="Q86X59"/>
<dbReference type="BioGRID-ORCS" id="388407">
    <property type="hits" value="121 hits in 1110 CRISPR screens"/>
</dbReference>
<dbReference type="GenomeRNAi" id="388407"/>
<dbReference type="Pharos" id="Q86X59">
    <property type="development level" value="Tdark"/>
</dbReference>
<dbReference type="Proteomes" id="UP000005640">
    <property type="component" value="Unplaced"/>
</dbReference>
<dbReference type="RNAct" id="Q86X59">
    <property type="molecule type" value="protein"/>
</dbReference>
<comment type="interaction">
    <interactant intactId="EBI-8465536">
        <id>Q86X59</id>
    </interactant>
    <interactant intactId="EBI-355744">
        <id>Q12933</id>
        <label>TRAF2</label>
    </interactant>
    <organismsDiffer>false</organismsDiffer>
    <experiments>3</experiments>
</comment>
<comment type="caution">
    <text evidence="3">Product of a dubious gene prediction.</text>
</comment>
<sequence>MGRPLEGQPLRALDLYPEPAFLRSGKDPKSSPASSPSFAVLGPEVRSTGGQAGSRRRPSAPCSQDRAAAEGAPALLGGSPSSGSPGHPPGSAFGVEAGCRALNVSEHARGGFALGLPFGLSGGAYLFLLLDGAGDPKPTPEAPISSADGRAWFPSESSWQLPQLPAGSTSGSEPRARPGLGPRQLLTGPRDGAAGQGPGRGLTARLGREREIDCGPRQAGHGGTATDTGRAGSGARHRPPRDRGTPGLRTH</sequence>
<accession>Q86X59</accession>
<proteinExistence type="uncertain"/>
<feature type="chain" id="PRO_0000284528" description="Putative uncharacterized protein LINC02875">
    <location>
        <begin position="1"/>
        <end position="251"/>
    </location>
</feature>
<feature type="region of interest" description="Disordered" evidence="1">
    <location>
        <begin position="1"/>
        <end position="92"/>
    </location>
</feature>
<feature type="region of interest" description="Disordered" evidence="1">
    <location>
        <begin position="137"/>
        <end position="251"/>
    </location>
</feature>
<feature type="compositionally biased region" description="Low complexity" evidence="1">
    <location>
        <begin position="69"/>
        <end position="92"/>
    </location>
</feature>
<feature type="compositionally biased region" description="Polar residues" evidence="1">
    <location>
        <begin position="155"/>
        <end position="172"/>
    </location>
</feature>
<feature type="sequence variant" id="VAR_031769" description="In dbSNP:rs9907379." evidence="2">
    <original>L</original>
    <variation>P</variation>
    <location>
        <position position="186"/>
    </location>
</feature>
<protein>
    <recommendedName>
        <fullName evidence="3">Putative uncharacterized protein LINC02875</fullName>
    </recommendedName>
</protein>
<keyword id="KW-1185">Reference proteome</keyword>
<gene>
    <name evidence="4" type="primary">LINC02875</name>
    <name evidence="4" type="synonym">C17orf82</name>
</gene>
<name>CQ082_HUMAN</name>